<keyword id="KW-0024">Alternative initiation</keyword>
<keyword id="KW-0067">ATP-binding</keyword>
<keyword id="KW-1003">Cell membrane</keyword>
<keyword id="KW-0140">cGMP</keyword>
<keyword id="KW-0142">cGMP-binding</keyword>
<keyword id="KW-0963">Cytoplasm</keyword>
<keyword id="KW-0903">Direct protein sequencing</keyword>
<keyword id="KW-0418">Kinase</keyword>
<keyword id="KW-0449">Lipoprotein</keyword>
<keyword id="KW-0460">Magnesium</keyword>
<keyword id="KW-0472">Membrane</keyword>
<keyword id="KW-0479">Metal-binding</keyword>
<keyword id="KW-0519">Myristate</keyword>
<keyword id="KW-0547">Nucleotide-binding</keyword>
<keyword id="KW-0564">Palmitate</keyword>
<keyword id="KW-0723">Serine/threonine-protein kinase</keyword>
<keyword id="KW-0808">Transferase</keyword>
<dbReference type="EC" id="2.7.11.12" evidence="6 7 8"/>
<dbReference type="EMBL" id="AF411961">
    <property type="protein sequence ID" value="AAM20900.1"/>
    <property type="molecule type" value="mRNA"/>
</dbReference>
<dbReference type="SMR" id="Q8MMZ8"/>
<dbReference type="BindingDB" id="Q8MMZ8"/>
<dbReference type="ChEMBL" id="CHEMBL5036"/>
<dbReference type="iPTMnet" id="Q8MMZ8"/>
<dbReference type="VEuPathDB" id="ToxoDB:ETH2_0728900"/>
<dbReference type="VEuPathDB" id="ToxoDB:ETH2_0729000"/>
<dbReference type="VEuPathDB" id="ToxoDB:ETH2_0742100"/>
<dbReference type="VEuPathDB" id="ToxoDB:ETH_00017800"/>
<dbReference type="VEuPathDB" id="ToxoDB:ETH_00027525"/>
<dbReference type="BRENDA" id="2.7.11.12">
    <property type="organism ID" value="2046"/>
</dbReference>
<dbReference type="SABIO-RK" id="Q8MMZ8"/>
<dbReference type="GO" id="GO:0005952">
    <property type="term" value="C:cAMP-dependent protein kinase complex"/>
    <property type="evidence" value="ECO:0007669"/>
    <property type="project" value="TreeGrafter"/>
</dbReference>
<dbReference type="GO" id="GO:0005737">
    <property type="term" value="C:cytoplasm"/>
    <property type="evidence" value="ECO:0007669"/>
    <property type="project" value="UniProtKB-SubCell"/>
</dbReference>
<dbReference type="GO" id="GO:0005886">
    <property type="term" value="C:plasma membrane"/>
    <property type="evidence" value="ECO:0007669"/>
    <property type="project" value="UniProtKB-SubCell"/>
</dbReference>
<dbReference type="GO" id="GO:0005524">
    <property type="term" value="F:ATP binding"/>
    <property type="evidence" value="ECO:0007669"/>
    <property type="project" value="UniProtKB-KW"/>
</dbReference>
<dbReference type="GO" id="GO:0004691">
    <property type="term" value="F:cAMP-dependent protein kinase activity"/>
    <property type="evidence" value="ECO:0007669"/>
    <property type="project" value="TreeGrafter"/>
</dbReference>
<dbReference type="GO" id="GO:0030553">
    <property type="term" value="F:cGMP binding"/>
    <property type="evidence" value="ECO:0000314"/>
    <property type="project" value="UniProtKB"/>
</dbReference>
<dbReference type="GO" id="GO:0004692">
    <property type="term" value="F:cGMP-dependent protein kinase activity"/>
    <property type="evidence" value="ECO:0000314"/>
    <property type="project" value="UniProtKB"/>
</dbReference>
<dbReference type="GO" id="GO:0046872">
    <property type="term" value="F:metal ion binding"/>
    <property type="evidence" value="ECO:0007669"/>
    <property type="project" value="UniProtKB-KW"/>
</dbReference>
<dbReference type="GO" id="GO:0006468">
    <property type="term" value="P:protein phosphorylation"/>
    <property type="evidence" value="ECO:0000314"/>
    <property type="project" value="UniProtKB"/>
</dbReference>
<dbReference type="CDD" id="cd00038">
    <property type="entry name" value="CAP_ED"/>
    <property type="match status" value="3"/>
</dbReference>
<dbReference type="CDD" id="cd05572">
    <property type="entry name" value="STKc_cGK"/>
    <property type="match status" value="1"/>
</dbReference>
<dbReference type="FunFam" id="2.60.120.10:FF:000068">
    <property type="entry name" value="cGMP-dependent protein kinase"/>
    <property type="match status" value="1"/>
</dbReference>
<dbReference type="FunFam" id="1.10.510.10:FF:000571">
    <property type="entry name" value="Maternal embryonic leucine zipper kinase"/>
    <property type="match status" value="1"/>
</dbReference>
<dbReference type="Gene3D" id="2.60.120.10">
    <property type="entry name" value="Jelly Rolls"/>
    <property type="match status" value="4"/>
</dbReference>
<dbReference type="Gene3D" id="3.30.200.20">
    <property type="entry name" value="Phosphorylase Kinase, domain 1"/>
    <property type="match status" value="1"/>
</dbReference>
<dbReference type="Gene3D" id="1.10.510.10">
    <property type="entry name" value="Transferase(Phosphotransferase) domain 1"/>
    <property type="match status" value="1"/>
</dbReference>
<dbReference type="InterPro" id="IPR000961">
    <property type="entry name" value="AGC-kinase_C"/>
</dbReference>
<dbReference type="InterPro" id="IPR018488">
    <property type="entry name" value="cNMP-bd_CS"/>
</dbReference>
<dbReference type="InterPro" id="IPR000595">
    <property type="entry name" value="cNMP-bd_dom"/>
</dbReference>
<dbReference type="InterPro" id="IPR018490">
    <property type="entry name" value="cNMP-bd_dom_sf"/>
</dbReference>
<dbReference type="InterPro" id="IPR011009">
    <property type="entry name" value="Kinase-like_dom_sf"/>
</dbReference>
<dbReference type="InterPro" id="IPR000719">
    <property type="entry name" value="Prot_kinase_dom"/>
</dbReference>
<dbReference type="InterPro" id="IPR017441">
    <property type="entry name" value="Protein_kinase_ATP_BS"/>
</dbReference>
<dbReference type="InterPro" id="IPR014710">
    <property type="entry name" value="RmlC-like_jellyroll"/>
</dbReference>
<dbReference type="InterPro" id="IPR008271">
    <property type="entry name" value="Ser/Thr_kinase_AS"/>
</dbReference>
<dbReference type="InterPro" id="IPR035014">
    <property type="entry name" value="STKc_cGK"/>
</dbReference>
<dbReference type="PANTHER" id="PTHR24353:SF37">
    <property type="entry name" value="CAMP-DEPENDENT PROTEIN KINASE CATALYTIC SUBUNIT PRKX"/>
    <property type="match status" value="1"/>
</dbReference>
<dbReference type="PANTHER" id="PTHR24353">
    <property type="entry name" value="CYCLIC NUCLEOTIDE-DEPENDENT PROTEIN KINASE"/>
    <property type="match status" value="1"/>
</dbReference>
<dbReference type="Pfam" id="PF00027">
    <property type="entry name" value="cNMP_binding"/>
    <property type="match status" value="3"/>
</dbReference>
<dbReference type="Pfam" id="PF00069">
    <property type="entry name" value="Pkinase"/>
    <property type="match status" value="1"/>
</dbReference>
<dbReference type="PRINTS" id="PR00103">
    <property type="entry name" value="CAMPKINASE"/>
</dbReference>
<dbReference type="SMART" id="SM00100">
    <property type="entry name" value="cNMP"/>
    <property type="match status" value="3"/>
</dbReference>
<dbReference type="SMART" id="SM00220">
    <property type="entry name" value="S_TKc"/>
    <property type="match status" value="1"/>
</dbReference>
<dbReference type="SUPFAM" id="SSF81995">
    <property type="entry name" value="beta-sandwich domain of Sec23/24"/>
    <property type="match status" value="1"/>
</dbReference>
<dbReference type="SUPFAM" id="SSF51206">
    <property type="entry name" value="cAMP-binding domain-like"/>
    <property type="match status" value="4"/>
</dbReference>
<dbReference type="SUPFAM" id="SSF56112">
    <property type="entry name" value="Protein kinase-like (PK-like)"/>
    <property type="match status" value="1"/>
</dbReference>
<dbReference type="PROSITE" id="PS51285">
    <property type="entry name" value="AGC_KINASE_CTER"/>
    <property type="match status" value="1"/>
</dbReference>
<dbReference type="PROSITE" id="PS00888">
    <property type="entry name" value="CNMP_BINDING_1"/>
    <property type="match status" value="2"/>
</dbReference>
<dbReference type="PROSITE" id="PS00889">
    <property type="entry name" value="CNMP_BINDING_2"/>
    <property type="match status" value="3"/>
</dbReference>
<dbReference type="PROSITE" id="PS50042">
    <property type="entry name" value="CNMP_BINDING_3"/>
    <property type="match status" value="4"/>
</dbReference>
<dbReference type="PROSITE" id="PS00107">
    <property type="entry name" value="PROTEIN_KINASE_ATP"/>
    <property type="match status" value="1"/>
</dbReference>
<dbReference type="PROSITE" id="PS50011">
    <property type="entry name" value="PROTEIN_KINASE_DOM"/>
    <property type="match status" value="1"/>
</dbReference>
<dbReference type="PROSITE" id="PS00108">
    <property type="entry name" value="PROTEIN_KINASE_ST"/>
    <property type="match status" value="1"/>
</dbReference>
<protein>
    <recommendedName>
        <fullName evidence="9">cGMP-dependent protein kinase</fullName>
        <ecNumber evidence="6 7 8">2.7.11.12</ecNumber>
    </recommendedName>
</protein>
<feature type="initiator methionine" description="Removed" evidence="12">
    <location>
        <position position="1"/>
    </location>
</feature>
<feature type="chain" id="PRO_0000451912" description="cGMP-dependent protein kinase">
    <location>
        <begin position="2"/>
        <end position="1003"/>
    </location>
</feature>
<feature type="domain" description="Protein kinase" evidence="3">
    <location>
        <begin position="693"/>
        <end position="950"/>
    </location>
</feature>
<feature type="domain" description="AGC-kinase C-terminal" evidence="4">
    <location>
        <begin position="951"/>
        <end position="1003"/>
    </location>
</feature>
<feature type="region of interest" description="Disordered" evidence="5">
    <location>
        <begin position="1"/>
        <end position="141"/>
    </location>
</feature>
<feature type="region of interest" description="cNMP-binding domain 1" evidence="2">
    <location>
        <begin position="173"/>
        <end position="289"/>
    </location>
</feature>
<feature type="region of interest" description="cNMP-binding domain 2" evidence="2">
    <location>
        <begin position="292"/>
        <end position="391"/>
    </location>
</feature>
<feature type="region of interest" description="cNMP-binding domain 3" evidence="2">
    <location>
        <begin position="411"/>
        <end position="548"/>
    </location>
</feature>
<feature type="region of interest" description="cNMP-binding domain 4" evidence="2">
    <location>
        <begin position="570"/>
        <end position="669"/>
    </location>
</feature>
<feature type="compositionally biased region" description="Low complexity" evidence="5">
    <location>
        <begin position="69"/>
        <end position="85"/>
    </location>
</feature>
<feature type="compositionally biased region" description="Basic and acidic residues" evidence="5">
    <location>
        <begin position="86"/>
        <end position="109"/>
    </location>
</feature>
<feature type="compositionally biased region" description="Basic and acidic residues" evidence="5">
    <location>
        <begin position="127"/>
        <end position="141"/>
    </location>
</feature>
<feature type="active site" description="Proton acceptor" evidence="3">
    <location>
        <position position="816"/>
    </location>
</feature>
<feature type="binding site" evidence="1">
    <location>
        <position position="237"/>
    </location>
    <ligand>
        <name>3',5'-cyclic GMP</name>
        <dbReference type="ChEBI" id="CHEBI:57746"/>
        <label>1</label>
        <note>allosteric activator</note>
    </ligand>
</feature>
<feature type="binding site" evidence="1">
    <location>
        <position position="238"/>
    </location>
    <ligand>
        <name>3',5'-cyclic GMP</name>
        <dbReference type="ChEBI" id="CHEBI:57746"/>
        <label>1</label>
        <note>allosteric activator</note>
    </ligand>
</feature>
<feature type="binding site" evidence="1">
    <location>
        <position position="247"/>
    </location>
    <ligand>
        <name>3',5'-cyclic GMP</name>
        <dbReference type="ChEBI" id="CHEBI:57746"/>
        <label>1</label>
        <note>allosteric activator</note>
    </ligand>
</feature>
<feature type="binding site" evidence="1">
    <location>
        <position position="248"/>
    </location>
    <ligand>
        <name>3',5'-cyclic GMP</name>
        <dbReference type="ChEBI" id="CHEBI:57746"/>
        <label>1</label>
        <note>allosteric activator</note>
    </ligand>
</feature>
<feature type="binding site" evidence="1">
    <location>
        <position position="625"/>
    </location>
    <ligand>
        <name>3',5'-cyclic GMP</name>
        <dbReference type="ChEBI" id="CHEBI:57746"/>
        <label>2</label>
        <note>allosteric activator</note>
    </ligand>
</feature>
<feature type="binding site" evidence="1">
    <location>
        <position position="634"/>
    </location>
    <ligand>
        <name>3',5'-cyclic GMP</name>
        <dbReference type="ChEBI" id="CHEBI:57746"/>
        <label>2</label>
        <note>allosteric activator</note>
    </ligand>
</feature>
<feature type="binding site" evidence="1">
    <location>
        <position position="635"/>
    </location>
    <ligand>
        <name>3',5'-cyclic GMP</name>
        <dbReference type="ChEBI" id="CHEBI:57746"/>
        <label>2</label>
        <note>allosteric activator</note>
    </ligand>
</feature>
<feature type="binding site" evidence="1">
    <location>
        <position position="637"/>
    </location>
    <ligand>
        <name>3',5'-cyclic GMP</name>
        <dbReference type="ChEBI" id="CHEBI:57746"/>
        <label>2</label>
        <note>allosteric activator</note>
    </ligand>
</feature>
<feature type="binding site" evidence="1">
    <location>
        <position position="644"/>
    </location>
    <ligand>
        <name>3',5'-cyclic GMP</name>
        <dbReference type="ChEBI" id="CHEBI:57746"/>
        <label>2</label>
        <note>allosteric activator</note>
    </ligand>
</feature>
<feature type="binding site" evidence="1">
    <location>
        <position position="645"/>
    </location>
    <ligand>
        <name>3',5'-cyclic GMP</name>
        <dbReference type="ChEBI" id="CHEBI:57746"/>
        <label>2</label>
        <note>allosteric activator</note>
    </ligand>
</feature>
<feature type="binding site" evidence="3">
    <location>
        <begin position="699"/>
        <end position="707"/>
    </location>
    <ligand>
        <name>ATP</name>
        <dbReference type="ChEBI" id="CHEBI:30616"/>
    </ligand>
</feature>
<feature type="binding site" evidence="3">
    <location>
        <position position="722"/>
    </location>
    <ligand>
        <name>ATP</name>
        <dbReference type="ChEBI" id="CHEBI:30616"/>
    </ligand>
</feature>
<feature type="lipid moiety-binding region" description="N-myristoyl glycine" evidence="12">
    <location>
        <position position="2"/>
    </location>
</feature>
<feature type="lipid moiety-binding region" description="S-palmitoyl cysteine" evidence="12">
    <location>
        <position position="4"/>
    </location>
</feature>
<feature type="splice variant" id="VSP_060885" description="In isoform 2." evidence="11">
    <location>
        <begin position="1"/>
        <end position="47"/>
    </location>
</feature>
<feature type="mutagenesis site" description="Loss of isoform 1 expression." evidence="7">
    <original>M</original>
    <variation>A</variation>
    <location>
        <position position="1"/>
    </location>
</feature>
<feature type="mutagenesis site" description="Loss of isoform 2 expression." evidence="7">
    <original>M</original>
    <variation>A</variation>
    <location>
        <position position="48"/>
    </location>
</feature>
<feature type="mutagenesis site" description="Loss of cooperativity between the cGMP-binding sites, however, addition of higher levels of cGMP restores normal catalytic activity; when associated with A-366. Loss of cooperativity between the cGMP-binding sites and partial loss of catalytic activity which cannot be rescued by the addition of higher levels of cGMP; when associated with A-366 and 643-A-A-644." evidence="7 8">
    <original>R</original>
    <variation>A</variation>
    <location>
        <position position="247"/>
    </location>
</feature>
<feature type="mutagenesis site" description="Loss of cooperativity between the cGMP-binding sites, however, addition of higher levels of cGMP restores normal catalytic activity; when associated with A-247. Loss of cooperativity between the cGMP-binding sites and partial loss of catalytic activity which cannot be rescued by the addition of higher levels of cGMP; when associated with A-247 and 643-A-A-644." evidence="7 8">
    <original>R</original>
    <variation>A</variation>
    <location>
        <position position="366"/>
    </location>
</feature>
<feature type="mutagenesis site" description="Partial loss of catalytic activity. Severe loss of catalytic activity; when associated with A-635." evidence="8">
    <original>E</original>
    <variation>A</variation>
    <location>
        <position position="635"/>
    </location>
</feature>
<feature type="mutagenesis site" description="Loss of cooperativity between the cGMP-binding sites, however, addition of higher levels of cGMP restores normal catalytic activity. Loss of cooperativity between the cGMP-binding sites and partial loss of catalytic activity which cannot be rescued by the addition of higher levels of cGMP; when associated with A-247 and A-366. Severe loss of catalytic activity; when associated with A-635." evidence="7 8">
    <original>RR</original>
    <variation>AA</variation>
    <location>
        <begin position="643"/>
        <end position="644"/>
    </location>
</feature>
<evidence type="ECO:0000250" key="1">
    <source>
        <dbReference type="UniProtKB" id="Q8I719"/>
    </source>
</evidence>
<evidence type="ECO:0000255" key="2">
    <source>
        <dbReference type="PROSITE-ProRule" id="PRU00060"/>
    </source>
</evidence>
<evidence type="ECO:0000255" key="3">
    <source>
        <dbReference type="PROSITE-ProRule" id="PRU00159"/>
    </source>
</evidence>
<evidence type="ECO:0000255" key="4">
    <source>
        <dbReference type="PROSITE-ProRule" id="PRU00618"/>
    </source>
</evidence>
<evidence type="ECO:0000256" key="5">
    <source>
        <dbReference type="SAM" id="MobiDB-lite"/>
    </source>
</evidence>
<evidence type="ECO:0000269" key="6">
    <source>
    </source>
</evidence>
<evidence type="ECO:0000269" key="7">
    <source>
    </source>
</evidence>
<evidence type="ECO:0000269" key="8">
    <source>
    </source>
</evidence>
<evidence type="ECO:0000303" key="9">
    <source>
    </source>
</evidence>
<evidence type="ECO:0000303" key="10">
    <source>
    </source>
</evidence>
<evidence type="ECO:0000305" key="11"/>
<evidence type="ECO:0000305" key="12">
    <source>
    </source>
</evidence>
<evidence type="ECO:0000312" key="13">
    <source>
        <dbReference type="EMBL" id="AAM20900.1"/>
    </source>
</evidence>
<sequence>MGACSSKAQHQTRDPEPREQQAAQEQKSTGPSGAPNDAPAPAEAERKMSGSSATAPKGEMPTASTGTPEQQQQQQQQQQQQQEQQQHPEHQQSEKQQQHGEEQQQERKPSQQQQNEEAAAPHKHGGERKVQKAIKQQEDTQAEDARLLGHLEKREKTPSDLSLIRDSLSTNLVCSSLNDAEVEALANAVEFFTFKKGDVVTKQGESGSYFFIVHSGEFEVIVNDKVVNKILTGQAFGEISLIHNSARTATIKTLSEDAALWGVQRQVFRETLKQLSSRNFAENRQFLASVKFFEMLTEAQKNVITNALVVQSFQPGQAIVKEGEKGDVLYILKSGKALVSIKNKEVRVLQRGEYFGERALLYDEPRSATITAEEPTVCVSIGRDLLDRVLGNLQHVLFRNIMLEALQQSKVFASFPTEQLSRLIGSVVVKDYPENYIILDRENRTRASASALFSAQGVRFFFVLEGEVSVFAYKDKSSSSSSSSSSSSSSSSAEGEMELHLIDTLKRGQAFGDEYVLSPNKPFAHCVKSNGPTKLALLTASALTATLGGQDIDETLDYNNKLAITKKMYIFRYLSEQQTQTLIKAFKTVRYTQGESIIREGEIGSRFFIIKLGEVVILKGEKRVRTLGRHDYFGERALLHDERRSATVAANSPEVDLWVVDKDVFLQIVKGPMLTHLEERIRMQDTKVEFKDLNVVRVVGRGTFGTVKLVQHIPTQMRYALKCVSRKSVVALNQQDHIRLEREIMAENDHPFIIRLVRTFRDKEFLYFLTELVTGGELYDAIRKLGLLGRYQAQFYLASIVLAIEYLHERNIAYRDLKPENILLDSQGYVKLIDFGCAKKMQGRAYTLVGTPHYMAPEVILGKGYTLTADTWAFGVCLYEFMCGPLPFGNDAEDQLEIFRDILAGKLIFPHYVTDQDAINLMKRLLCRLPEVRIGCSINGYKDIKEHAFFSDFDWDRLAGRDLSPPLLPKGEIYAEDAEEGGLDIEEDEGIELEDEYEWDKDF</sequence>
<organism evidence="13">
    <name type="scientific">Eimeria tenella</name>
    <name type="common">Coccidian parasite</name>
    <dbReference type="NCBI Taxonomy" id="5802"/>
    <lineage>
        <taxon>Eukaryota</taxon>
        <taxon>Sar</taxon>
        <taxon>Alveolata</taxon>
        <taxon>Apicomplexa</taxon>
        <taxon>Conoidasida</taxon>
        <taxon>Coccidia</taxon>
        <taxon>Eucoccidiorida</taxon>
        <taxon>Eimeriorina</taxon>
        <taxon>Eimeriidae</taxon>
        <taxon>Eimeria</taxon>
    </lineage>
</organism>
<comment type="function">
    <text evidence="6 7 8">Serine/threonine protein kinase which acts as a downstream effector of the second messenger cGMP.</text>
</comment>
<comment type="catalytic activity">
    <reaction evidence="6 7 8">
        <text>L-seryl-[protein] + ATP = O-phospho-L-seryl-[protein] + ADP + H(+)</text>
        <dbReference type="Rhea" id="RHEA:17989"/>
        <dbReference type="Rhea" id="RHEA-COMP:9863"/>
        <dbReference type="Rhea" id="RHEA-COMP:11604"/>
        <dbReference type="ChEBI" id="CHEBI:15378"/>
        <dbReference type="ChEBI" id="CHEBI:29999"/>
        <dbReference type="ChEBI" id="CHEBI:30616"/>
        <dbReference type="ChEBI" id="CHEBI:83421"/>
        <dbReference type="ChEBI" id="CHEBI:456216"/>
        <dbReference type="EC" id="2.7.11.12"/>
    </reaction>
</comment>
<comment type="catalytic activity">
    <reaction evidence="6 7 8">
        <text>L-threonyl-[protein] + ATP = O-phospho-L-threonyl-[protein] + ADP + H(+)</text>
        <dbReference type="Rhea" id="RHEA:46608"/>
        <dbReference type="Rhea" id="RHEA-COMP:11060"/>
        <dbReference type="Rhea" id="RHEA-COMP:11605"/>
        <dbReference type="ChEBI" id="CHEBI:15378"/>
        <dbReference type="ChEBI" id="CHEBI:30013"/>
        <dbReference type="ChEBI" id="CHEBI:30616"/>
        <dbReference type="ChEBI" id="CHEBI:61977"/>
        <dbReference type="ChEBI" id="CHEBI:456216"/>
        <dbReference type="EC" id="2.7.11.12"/>
    </reaction>
</comment>
<comment type="cofactor">
    <cofactor evidence="6">
        <name>Mg(2+)</name>
        <dbReference type="ChEBI" id="CHEBI:18420"/>
    </cofactor>
</comment>
<comment type="activity regulation">
    <text evidence="6 8">Activated by cGMP (PubMed:11834729, PubMed:11914085). The cGMP-binding domains acts cooperatively to activate PKG (PubMed:11914085). Inhibited by the antiparasitic small molecule 4-[2-(4-fluorophenyl)-5-(1-methylpiperidine-4-yl)-1Hpyrrol- 3-yl]pyridine (compound 1) (PubMed:11834729).</text>
</comment>
<comment type="biophysicochemical properties">
    <kinetics>
        <KM evidence="6">12 uM for ATP (at 30 degrees Celsius and pH 7)</KM>
    </kinetics>
</comment>
<comment type="subunit">
    <text evidence="6">Monomer.</text>
</comment>
<comment type="subcellular location">
    <molecule>Isoform 1</molecule>
    <subcellularLocation>
        <location evidence="12">Cell membrane</location>
        <topology evidence="12">Lipid-anchor</topology>
    </subcellularLocation>
</comment>
<comment type="subcellular location">
    <molecule>Isoform 2</molecule>
    <subcellularLocation>
        <location evidence="12">Cytoplasm</location>
    </subcellularLocation>
</comment>
<comment type="alternative products">
    <event type="alternative initiation"/>
    <isoform>
        <id>Q8MMZ8-1</id>
        <name>1</name>
        <name evidence="10">Isoform I</name>
        <sequence type="displayed"/>
    </isoform>
    <isoform>
        <id>Q8MMZ8-2</id>
        <name>2</name>
        <name evidence="10">Isoform II</name>
        <sequence type="described" ref="VSP_060885"/>
    </isoform>
</comment>
<comment type="developmental stage">
    <text evidence="6">Expressed in unsporulated oocysts.</text>
</comment>
<comment type="similarity">
    <text evidence="11">Belongs to the protein kinase superfamily. AGC Ser/Thr protein kinase family. cGMP subfamily.</text>
</comment>
<name>KGP_EIMTE</name>
<reference evidence="13" key="1">
    <citation type="journal article" date="2002" name="J. Biol. Chem.">
        <title>Purification and molecular characterization of cGMP-dependent protein kinase from Apicomplexan parasites. A novel chemotherapeutic target.</title>
        <authorList>
            <person name="Gurnett A."/>
            <person name="Liberator P.A."/>
            <person name="Dulski P."/>
            <person name="Salowe S.P."/>
            <person name="Donald R.G.K."/>
            <person name="Anderson J.W."/>
            <person name="Wiltsie J."/>
            <person name="Diaz-Saldana C.A."/>
            <person name="Harris G."/>
            <person name="Chang B."/>
            <person name="Darkin-Rattray S.J."/>
            <person name="Nare B."/>
            <person name="Crumley T."/>
            <person name="Blum P."/>
            <person name="Misura A."/>
            <person name="Tamas T."/>
            <person name="Sardana M."/>
            <person name="Yuan J."/>
            <person name="Biftu T."/>
            <person name="Schmatz D."/>
        </authorList>
    </citation>
    <scope>NUCLEOTIDE SEQUENCE [MRNA] (ISOFORM 1)</scope>
    <scope>ALTERNATIVE SPLICING</scope>
    <scope>PROTEIN SEQUENCE OF 59-75; 100-115; 138-153; 281-288; 328-332; 338-342 AND 664-669</scope>
    <scope>FUNCTION</scope>
    <scope>CATALYTIC ACTIVITY</scope>
    <scope>COFACTOR</scope>
    <scope>ACTIVITY REGULATION</scope>
    <scope>BIOPHYSICOCHEMICAL PROPERTIES</scope>
    <scope>SUBUNIT</scope>
    <scope>DEVELOPMENTAL STAGE</scope>
</reference>
<reference evidence="13" key="2">
    <citation type="journal article" date="2002" name="Mol. Biochem. Parasitol.">
        <title>Molecular characterization of a coccidian parasite cGMP dependent protein kinase.</title>
        <authorList>
            <person name="Donald R.G."/>
            <person name="Liberator P.A."/>
        </authorList>
    </citation>
    <scope>NUCLEOTIDE SEQUENCE [MRNA] (ISOFORM 1)</scope>
    <scope>ALTERNATIVE SPLICING</scope>
    <scope>FUNCTION</scope>
    <scope>CATALYTIC ACTIVITY</scope>
    <scope>SUBCELLULAR LOCATION</scope>
    <scope>MYRISTOYLATION AT GLY-2</scope>
    <scope>PALMITOYLATION AT CYS-4</scope>
    <scope>MUTAGENESIS OF MET-1; MET-48; ARG-247; ARG-366 AND 643-ARG--ARG-644</scope>
</reference>
<reference evidence="11" key="3">
    <citation type="journal article" date="2002" name="Biochemistry">
        <title>The role of a parasite-specific allosteric site in the distinctive activation behavior of Eimeria tenella cGMP-dependent protein kinase.</title>
        <authorList>
            <person name="Salowe S.P."/>
            <person name="Wiltsie J."/>
            <person name="Liberator P.A."/>
            <person name="Donald R.G."/>
        </authorList>
    </citation>
    <scope>FUNCTION</scope>
    <scope>CATALYTIC ACTIVITY</scope>
    <scope>ACTIVITY REGULATION</scope>
    <scope>MUTAGENESIS OF ARG-247; ARG-366; GLU-635 AND 643-ARG--ARG-644</scope>
</reference>
<accession>Q8MMZ8</accession>
<gene>
    <name evidence="9" type="primary">PKG</name>
</gene>
<proteinExistence type="evidence at protein level"/>